<comment type="function">
    <text evidence="2">This is one of the proteins that bind and probably mediate the attachment of the 5S RNA into the large ribosomal subunit, where it forms part of the central protuberance. In the 70S ribosome it contacts protein S13 of the 30S subunit (bridge B1b), connecting the 2 subunits; this bridge is implicated in subunit movement. Contacts the P site tRNA; the 5S rRNA and some of its associated proteins might help stabilize positioning of ribosome-bound tRNAs.</text>
</comment>
<comment type="subunit">
    <text evidence="1">Part of the 50S ribosomal subunit; part of the 5S rRNA subcomplex. Contacts the 5S rRNA and the P site tRNA. Forms a bridge to the 30S subunit in the 70S ribosome (By similarity).</text>
</comment>
<comment type="similarity">
    <text evidence="2">Belongs to the universal ribosomal protein uL5 family.</text>
</comment>
<keyword id="KW-0687">Ribonucleoprotein</keyword>
<keyword id="KW-0689">Ribosomal protein</keyword>
<keyword id="KW-0694">RNA-binding</keyword>
<keyword id="KW-0699">rRNA-binding</keyword>
<keyword id="KW-0820">tRNA-binding</keyword>
<evidence type="ECO:0000250" key="1"/>
<evidence type="ECO:0000255" key="2">
    <source>
        <dbReference type="HAMAP-Rule" id="MF_01333"/>
    </source>
</evidence>
<evidence type="ECO:0000305" key="3"/>
<gene>
    <name evidence="2" type="primary">rplE</name>
    <name type="ordered locus">LMOf2365_2593</name>
</gene>
<name>RL5_LISMF</name>
<organism>
    <name type="scientific">Listeria monocytogenes serotype 4b (strain F2365)</name>
    <dbReference type="NCBI Taxonomy" id="265669"/>
    <lineage>
        <taxon>Bacteria</taxon>
        <taxon>Bacillati</taxon>
        <taxon>Bacillota</taxon>
        <taxon>Bacilli</taxon>
        <taxon>Bacillales</taxon>
        <taxon>Listeriaceae</taxon>
        <taxon>Listeria</taxon>
    </lineage>
</organism>
<proteinExistence type="inferred from homology"/>
<protein>
    <recommendedName>
        <fullName evidence="2">Large ribosomal subunit protein uL5</fullName>
    </recommendedName>
    <alternativeName>
        <fullName evidence="3">50S ribosomal protein L5</fullName>
    </alternativeName>
</protein>
<reference key="1">
    <citation type="journal article" date="2004" name="Nucleic Acids Res.">
        <title>Whole genome comparisons of serotype 4b and 1/2a strains of the food-borne pathogen Listeria monocytogenes reveal new insights into the core genome components of this species.</title>
        <authorList>
            <person name="Nelson K.E."/>
            <person name="Fouts D.E."/>
            <person name="Mongodin E.F."/>
            <person name="Ravel J."/>
            <person name="DeBoy R.T."/>
            <person name="Kolonay J.F."/>
            <person name="Rasko D.A."/>
            <person name="Angiuoli S.V."/>
            <person name="Gill S.R."/>
            <person name="Paulsen I.T."/>
            <person name="Peterson J.D."/>
            <person name="White O."/>
            <person name="Nelson W.C."/>
            <person name="Nierman W.C."/>
            <person name="Beanan M.J."/>
            <person name="Brinkac L.M."/>
            <person name="Daugherty S.C."/>
            <person name="Dodson R.J."/>
            <person name="Durkin A.S."/>
            <person name="Madupu R."/>
            <person name="Haft D.H."/>
            <person name="Selengut J."/>
            <person name="Van Aken S.E."/>
            <person name="Khouri H.M."/>
            <person name="Fedorova N."/>
            <person name="Forberger H.A."/>
            <person name="Tran B."/>
            <person name="Kathariou S."/>
            <person name="Wonderling L.D."/>
            <person name="Uhlich G.A."/>
            <person name="Bayles D.O."/>
            <person name="Luchansky J.B."/>
            <person name="Fraser C.M."/>
        </authorList>
    </citation>
    <scope>NUCLEOTIDE SEQUENCE [LARGE SCALE GENOMIC DNA]</scope>
    <source>
        <strain>F2365</strain>
    </source>
</reference>
<accession>Q71WF8</accession>
<dbReference type="EMBL" id="AE017262">
    <property type="protein sequence ID" value="AAT05358.1"/>
    <property type="molecule type" value="Genomic_DNA"/>
</dbReference>
<dbReference type="RefSeq" id="WP_003720938.1">
    <property type="nucleotide sequence ID" value="NC_002973.6"/>
</dbReference>
<dbReference type="SMR" id="Q71WF8"/>
<dbReference type="GeneID" id="93240501"/>
<dbReference type="KEGG" id="lmf:LMOf2365_2593"/>
<dbReference type="HOGENOM" id="CLU_061015_2_1_9"/>
<dbReference type="GO" id="GO:1990904">
    <property type="term" value="C:ribonucleoprotein complex"/>
    <property type="evidence" value="ECO:0007669"/>
    <property type="project" value="UniProtKB-KW"/>
</dbReference>
<dbReference type="GO" id="GO:0005840">
    <property type="term" value="C:ribosome"/>
    <property type="evidence" value="ECO:0007669"/>
    <property type="project" value="UniProtKB-KW"/>
</dbReference>
<dbReference type="GO" id="GO:0019843">
    <property type="term" value="F:rRNA binding"/>
    <property type="evidence" value="ECO:0007669"/>
    <property type="project" value="UniProtKB-UniRule"/>
</dbReference>
<dbReference type="GO" id="GO:0003735">
    <property type="term" value="F:structural constituent of ribosome"/>
    <property type="evidence" value="ECO:0007669"/>
    <property type="project" value="InterPro"/>
</dbReference>
<dbReference type="GO" id="GO:0000049">
    <property type="term" value="F:tRNA binding"/>
    <property type="evidence" value="ECO:0007669"/>
    <property type="project" value="UniProtKB-UniRule"/>
</dbReference>
<dbReference type="GO" id="GO:0006412">
    <property type="term" value="P:translation"/>
    <property type="evidence" value="ECO:0007669"/>
    <property type="project" value="UniProtKB-UniRule"/>
</dbReference>
<dbReference type="FunFam" id="3.30.1440.10:FF:000001">
    <property type="entry name" value="50S ribosomal protein L5"/>
    <property type="match status" value="1"/>
</dbReference>
<dbReference type="Gene3D" id="3.30.1440.10">
    <property type="match status" value="1"/>
</dbReference>
<dbReference type="HAMAP" id="MF_01333_B">
    <property type="entry name" value="Ribosomal_uL5_B"/>
    <property type="match status" value="1"/>
</dbReference>
<dbReference type="InterPro" id="IPR002132">
    <property type="entry name" value="Ribosomal_uL5"/>
</dbReference>
<dbReference type="InterPro" id="IPR020930">
    <property type="entry name" value="Ribosomal_uL5_bac-type"/>
</dbReference>
<dbReference type="InterPro" id="IPR031309">
    <property type="entry name" value="Ribosomal_uL5_C"/>
</dbReference>
<dbReference type="InterPro" id="IPR020929">
    <property type="entry name" value="Ribosomal_uL5_CS"/>
</dbReference>
<dbReference type="InterPro" id="IPR022803">
    <property type="entry name" value="Ribosomal_uL5_dom_sf"/>
</dbReference>
<dbReference type="InterPro" id="IPR031310">
    <property type="entry name" value="Ribosomal_uL5_N"/>
</dbReference>
<dbReference type="NCBIfam" id="NF000585">
    <property type="entry name" value="PRK00010.1"/>
    <property type="match status" value="1"/>
</dbReference>
<dbReference type="PANTHER" id="PTHR11994">
    <property type="entry name" value="60S RIBOSOMAL PROTEIN L11-RELATED"/>
    <property type="match status" value="1"/>
</dbReference>
<dbReference type="Pfam" id="PF00281">
    <property type="entry name" value="Ribosomal_L5"/>
    <property type="match status" value="1"/>
</dbReference>
<dbReference type="Pfam" id="PF00673">
    <property type="entry name" value="Ribosomal_L5_C"/>
    <property type="match status" value="1"/>
</dbReference>
<dbReference type="PIRSF" id="PIRSF002161">
    <property type="entry name" value="Ribosomal_L5"/>
    <property type="match status" value="1"/>
</dbReference>
<dbReference type="SUPFAM" id="SSF55282">
    <property type="entry name" value="RL5-like"/>
    <property type="match status" value="1"/>
</dbReference>
<dbReference type="PROSITE" id="PS00358">
    <property type="entry name" value="RIBOSOMAL_L5"/>
    <property type="match status" value="1"/>
</dbReference>
<sequence length="179" mass="19995">MNRLKDQYLKEIVPALMSKFNYDSVMEVPKIDKIVINTGVGDATANAKVLDSAVEELALITGQKPVITKAKNSIAGFRLREGMPIGAKVTLRGERMYDFLDKLVTVSLPRVRDFRGVSKKAFDGRGNYTLGVREQLIFPEIDYDQVSKVRGMDVVIVTTAKSDEESHELLTQLGMPFQK</sequence>
<feature type="chain" id="PRO_0000124943" description="Large ribosomal subunit protein uL5">
    <location>
        <begin position="1"/>
        <end position="179"/>
    </location>
</feature>